<accession>C0QQQ2</accession>
<organism>
    <name type="scientific">Persephonella marina (strain DSM 14350 / EX-H1)</name>
    <dbReference type="NCBI Taxonomy" id="123214"/>
    <lineage>
        <taxon>Bacteria</taxon>
        <taxon>Pseudomonadati</taxon>
        <taxon>Aquificota</taxon>
        <taxon>Aquificia</taxon>
        <taxon>Aquificales</taxon>
        <taxon>Hydrogenothermaceae</taxon>
        <taxon>Persephonella</taxon>
    </lineage>
</organism>
<gene>
    <name evidence="1" type="primary">rplQ</name>
    <name type="ordered locus">PERMA_1225</name>
</gene>
<comment type="subunit">
    <text evidence="1">Part of the 50S ribosomal subunit. Contacts protein L32.</text>
</comment>
<comment type="similarity">
    <text evidence="1">Belongs to the bacterial ribosomal protein bL17 family.</text>
</comment>
<dbReference type="EMBL" id="CP001230">
    <property type="protein sequence ID" value="ACO04841.1"/>
    <property type="molecule type" value="Genomic_DNA"/>
</dbReference>
<dbReference type="RefSeq" id="WP_015898945.1">
    <property type="nucleotide sequence ID" value="NC_012440.1"/>
</dbReference>
<dbReference type="SMR" id="C0QQQ2"/>
<dbReference type="STRING" id="123214.PERMA_1225"/>
<dbReference type="PaxDb" id="123214-PERMA_1225"/>
<dbReference type="KEGG" id="pmx:PERMA_1225"/>
<dbReference type="eggNOG" id="COG0203">
    <property type="taxonomic scope" value="Bacteria"/>
</dbReference>
<dbReference type="HOGENOM" id="CLU_074407_2_2_0"/>
<dbReference type="OrthoDB" id="9809073at2"/>
<dbReference type="Proteomes" id="UP000001366">
    <property type="component" value="Chromosome"/>
</dbReference>
<dbReference type="GO" id="GO:0022625">
    <property type="term" value="C:cytosolic large ribosomal subunit"/>
    <property type="evidence" value="ECO:0007669"/>
    <property type="project" value="TreeGrafter"/>
</dbReference>
<dbReference type="GO" id="GO:0003735">
    <property type="term" value="F:structural constituent of ribosome"/>
    <property type="evidence" value="ECO:0007669"/>
    <property type="project" value="InterPro"/>
</dbReference>
<dbReference type="GO" id="GO:0006412">
    <property type="term" value="P:translation"/>
    <property type="evidence" value="ECO:0007669"/>
    <property type="project" value="UniProtKB-UniRule"/>
</dbReference>
<dbReference type="Gene3D" id="3.90.1030.10">
    <property type="entry name" value="Ribosomal protein L17"/>
    <property type="match status" value="1"/>
</dbReference>
<dbReference type="HAMAP" id="MF_01368">
    <property type="entry name" value="Ribosomal_bL17"/>
    <property type="match status" value="1"/>
</dbReference>
<dbReference type="InterPro" id="IPR000456">
    <property type="entry name" value="Ribosomal_bL17"/>
</dbReference>
<dbReference type="InterPro" id="IPR047859">
    <property type="entry name" value="Ribosomal_bL17_CS"/>
</dbReference>
<dbReference type="InterPro" id="IPR036373">
    <property type="entry name" value="Ribosomal_bL17_sf"/>
</dbReference>
<dbReference type="NCBIfam" id="TIGR00059">
    <property type="entry name" value="L17"/>
    <property type="match status" value="1"/>
</dbReference>
<dbReference type="PANTHER" id="PTHR14413:SF16">
    <property type="entry name" value="LARGE RIBOSOMAL SUBUNIT PROTEIN BL17M"/>
    <property type="match status" value="1"/>
</dbReference>
<dbReference type="PANTHER" id="PTHR14413">
    <property type="entry name" value="RIBOSOMAL PROTEIN L17"/>
    <property type="match status" value="1"/>
</dbReference>
<dbReference type="Pfam" id="PF01196">
    <property type="entry name" value="Ribosomal_L17"/>
    <property type="match status" value="1"/>
</dbReference>
<dbReference type="SUPFAM" id="SSF64263">
    <property type="entry name" value="Prokaryotic ribosomal protein L17"/>
    <property type="match status" value="1"/>
</dbReference>
<dbReference type="PROSITE" id="PS01167">
    <property type="entry name" value="RIBOSOMAL_L17"/>
    <property type="match status" value="1"/>
</dbReference>
<protein>
    <recommendedName>
        <fullName evidence="1">Large ribosomal subunit protein bL17</fullName>
    </recommendedName>
    <alternativeName>
        <fullName evidence="2">50S ribosomal protein L17</fullName>
    </alternativeName>
</protein>
<feature type="chain" id="PRO_1000184036" description="Large ribosomal subunit protein bL17">
    <location>
        <begin position="1"/>
        <end position="124"/>
    </location>
</feature>
<keyword id="KW-1185">Reference proteome</keyword>
<keyword id="KW-0687">Ribonucleoprotein</keyword>
<keyword id="KW-0689">Ribosomal protein</keyword>
<evidence type="ECO:0000255" key="1">
    <source>
        <dbReference type="HAMAP-Rule" id="MF_01368"/>
    </source>
</evidence>
<evidence type="ECO:0000305" key="2"/>
<sequence>MRHRVKTKSFHRPKEQREALFVNLAIALIEHGKIETTVQKAKALRPFVEKLVTLAKKETVAARRLLNARLRNNTKAATKLFKEIAPLLKERNGGYTRIYKLDKRRRGDDAQMAIIEFVEHPDKE</sequence>
<name>RL17_PERMH</name>
<reference key="1">
    <citation type="journal article" date="2009" name="J. Bacteriol.">
        <title>Complete and draft genome sequences of six members of the Aquificales.</title>
        <authorList>
            <person name="Reysenbach A.-L."/>
            <person name="Hamamura N."/>
            <person name="Podar M."/>
            <person name="Griffiths E."/>
            <person name="Ferreira S."/>
            <person name="Hochstein R."/>
            <person name="Heidelberg J."/>
            <person name="Johnson J."/>
            <person name="Mead D."/>
            <person name="Pohorille A."/>
            <person name="Sarmiento M."/>
            <person name="Schweighofer K."/>
            <person name="Seshadri R."/>
            <person name="Voytek M.A."/>
        </authorList>
    </citation>
    <scope>NUCLEOTIDE SEQUENCE [LARGE SCALE GENOMIC DNA]</scope>
    <source>
        <strain>DSM 14350 / EX-H1</strain>
    </source>
</reference>
<proteinExistence type="inferred from homology"/>